<dbReference type="EMBL" id="AY626808">
    <property type="protein sequence ID" value="AAU87571.1"/>
    <property type="molecule type" value="mRNA"/>
</dbReference>
<dbReference type="EMBL" id="AE014134">
    <property type="protein sequence ID" value="AAN11060.1"/>
    <property type="molecule type" value="Genomic_DNA"/>
</dbReference>
<dbReference type="EMBL" id="BT001780">
    <property type="protein sequence ID" value="AAN71535.1"/>
    <property type="molecule type" value="mRNA"/>
</dbReference>
<dbReference type="EMBL" id="AY117427">
    <property type="protein sequence ID" value="AAR12637.1"/>
    <property type="status" value="ALT_SEQ"/>
    <property type="molecule type" value="mRNA"/>
</dbReference>
<dbReference type="RefSeq" id="NP_724239.1">
    <property type="nucleotide sequence ID" value="NM_165316.2"/>
</dbReference>
<dbReference type="FunCoup" id="Q9VIQ0">
    <property type="interactions" value="11"/>
</dbReference>
<dbReference type="STRING" id="7227.FBpp0080859"/>
<dbReference type="PaxDb" id="7227-FBpp0080859"/>
<dbReference type="DNASU" id="35286"/>
<dbReference type="EnsemblMetazoa" id="FBtr0081327">
    <property type="protein sequence ID" value="FBpp0080859"/>
    <property type="gene ID" value="FBgn0032840"/>
</dbReference>
<dbReference type="GeneID" id="35286"/>
<dbReference type="KEGG" id="dme:Dmel_CG13968"/>
<dbReference type="AGR" id="FB:FBgn0032840"/>
<dbReference type="CTD" id="35286"/>
<dbReference type="FlyBase" id="FBgn0032840">
    <property type="gene designation" value="sNPF"/>
</dbReference>
<dbReference type="VEuPathDB" id="VectorBase:FBgn0032840"/>
<dbReference type="eggNOG" id="ENOG502SEMZ">
    <property type="taxonomic scope" value="Eukaryota"/>
</dbReference>
<dbReference type="HOGENOM" id="CLU_953988_0_0_1"/>
<dbReference type="InParanoid" id="Q9VIQ0"/>
<dbReference type="OMA" id="ADNEQIE"/>
<dbReference type="OrthoDB" id="6364308at2759"/>
<dbReference type="PhylomeDB" id="Q9VIQ0"/>
<dbReference type="BioGRID-ORCS" id="35286">
    <property type="hits" value="0 hits in 1 CRISPR screen"/>
</dbReference>
<dbReference type="GenomeRNAi" id="35286"/>
<dbReference type="PRO" id="PR:Q9VIQ0"/>
<dbReference type="Proteomes" id="UP000000803">
    <property type="component" value="Chromosome 2L"/>
</dbReference>
<dbReference type="Bgee" id="FBgn0032840">
    <property type="expression patterns" value="Expressed in adult gamma Kenyon cell in brain and 134 other cell types or tissues"/>
</dbReference>
<dbReference type="ExpressionAtlas" id="Q9VIQ0">
    <property type="expression patterns" value="baseline and differential"/>
</dbReference>
<dbReference type="GO" id="GO:0030424">
    <property type="term" value="C:axon"/>
    <property type="evidence" value="ECO:0000314"/>
    <property type="project" value="FlyBase"/>
</dbReference>
<dbReference type="GO" id="GO:0005576">
    <property type="term" value="C:extracellular region"/>
    <property type="evidence" value="ECO:0000314"/>
    <property type="project" value="UniProtKB"/>
</dbReference>
<dbReference type="GO" id="GO:0005615">
    <property type="term" value="C:extracellular space"/>
    <property type="evidence" value="ECO:0000314"/>
    <property type="project" value="FlyBase"/>
</dbReference>
<dbReference type="GO" id="GO:0043025">
    <property type="term" value="C:neuronal cell body"/>
    <property type="evidence" value="ECO:0000314"/>
    <property type="project" value="FlyBase"/>
</dbReference>
<dbReference type="GO" id="GO:0005184">
    <property type="term" value="F:neuropeptide hormone activity"/>
    <property type="evidence" value="ECO:0000314"/>
    <property type="project" value="UniProtKB"/>
</dbReference>
<dbReference type="GO" id="GO:0071855">
    <property type="term" value="F:neuropeptide receptor binding"/>
    <property type="evidence" value="ECO:0000353"/>
    <property type="project" value="FlyBase"/>
</dbReference>
<dbReference type="GO" id="GO:0048018">
    <property type="term" value="F:receptor ligand activity"/>
    <property type="evidence" value="ECO:0000353"/>
    <property type="project" value="FlyBase"/>
</dbReference>
<dbReference type="GO" id="GO:0008343">
    <property type="term" value="P:adult feeding behavior"/>
    <property type="evidence" value="ECO:0000315"/>
    <property type="project" value="FlyBase"/>
</dbReference>
<dbReference type="GO" id="GO:0007623">
    <property type="term" value="P:circadian rhythm"/>
    <property type="evidence" value="ECO:0000270"/>
    <property type="project" value="FlyBase"/>
</dbReference>
<dbReference type="GO" id="GO:0008340">
    <property type="term" value="P:determination of adult lifespan"/>
    <property type="evidence" value="ECO:0000315"/>
    <property type="project" value="FlyBase"/>
</dbReference>
<dbReference type="GO" id="GO:0030536">
    <property type="term" value="P:larval feeding behavior"/>
    <property type="evidence" value="ECO:0000315"/>
    <property type="project" value="FlyBase"/>
</dbReference>
<dbReference type="GO" id="GO:0035264">
    <property type="term" value="P:multicellular organism growth"/>
    <property type="evidence" value="ECO:0000315"/>
    <property type="project" value="FlyBase"/>
</dbReference>
<dbReference type="GO" id="GO:0007218">
    <property type="term" value="P:neuropeptide signaling pathway"/>
    <property type="evidence" value="ECO:0000314"/>
    <property type="project" value="UniProtKB"/>
</dbReference>
<dbReference type="GO" id="GO:0045793">
    <property type="term" value="P:positive regulation of cell size"/>
    <property type="evidence" value="ECO:0000315"/>
    <property type="project" value="FlyBase"/>
</dbReference>
<dbReference type="GO" id="GO:0070374">
    <property type="term" value="P:positive regulation of ERK1 and ERK2 cascade"/>
    <property type="evidence" value="ECO:0000315"/>
    <property type="project" value="FlyBase"/>
</dbReference>
<dbReference type="GO" id="GO:0040018">
    <property type="term" value="P:positive regulation of multicellular organism growth"/>
    <property type="evidence" value="ECO:0000315"/>
    <property type="project" value="FlyBase"/>
</dbReference>
<dbReference type="GO" id="GO:0010906">
    <property type="term" value="P:regulation of glucose metabolic process"/>
    <property type="evidence" value="ECO:0000315"/>
    <property type="project" value="FlyBase"/>
</dbReference>
<dbReference type="GO" id="GO:0040014">
    <property type="term" value="P:regulation of multicellular organism growth"/>
    <property type="evidence" value="ECO:0000315"/>
    <property type="project" value="UniProtKB"/>
</dbReference>
<dbReference type="GO" id="GO:0032095">
    <property type="term" value="P:regulation of response to food"/>
    <property type="evidence" value="ECO:0000315"/>
    <property type="project" value="UniProtKB"/>
</dbReference>
<proteinExistence type="evidence at protein level"/>
<keyword id="KW-0027">Amidation</keyword>
<keyword id="KW-0165">Cleavage on pair of basic residues</keyword>
<keyword id="KW-0903">Direct protein sequencing</keyword>
<keyword id="KW-0527">Neuropeptide</keyword>
<keyword id="KW-1185">Reference proteome</keyword>
<keyword id="KW-0964">Secreted</keyword>
<keyword id="KW-0732">Signal</keyword>
<evidence type="ECO:0000250" key="1"/>
<evidence type="ECO:0000255" key="2"/>
<evidence type="ECO:0000256" key="3">
    <source>
        <dbReference type="SAM" id="MobiDB-lite"/>
    </source>
</evidence>
<evidence type="ECO:0000269" key="4">
    <source>
    </source>
</evidence>
<evidence type="ECO:0000269" key="5">
    <source>
    </source>
</evidence>
<evidence type="ECO:0000303" key="6">
    <source>
    </source>
</evidence>
<evidence type="ECO:0000305" key="7"/>
<organism>
    <name type="scientific">Drosophila melanogaster</name>
    <name type="common">Fruit fly</name>
    <dbReference type="NCBI Taxonomy" id="7227"/>
    <lineage>
        <taxon>Eukaryota</taxon>
        <taxon>Metazoa</taxon>
        <taxon>Ecdysozoa</taxon>
        <taxon>Arthropoda</taxon>
        <taxon>Hexapoda</taxon>
        <taxon>Insecta</taxon>
        <taxon>Pterygota</taxon>
        <taxon>Neoptera</taxon>
        <taxon>Endopterygota</taxon>
        <taxon>Diptera</taxon>
        <taxon>Brachycera</taxon>
        <taxon>Muscomorpha</taxon>
        <taxon>Ephydroidea</taxon>
        <taxon>Drosophilidae</taxon>
        <taxon>Drosophila</taxon>
        <taxon>Sophophora</taxon>
    </lineage>
</organism>
<feature type="signal peptide" evidence="2">
    <location>
        <begin position="1"/>
        <end position="30"/>
    </location>
</feature>
<feature type="propeptide" id="PRO_0000022379">
    <location>
        <begin position="31"/>
        <end position="64"/>
    </location>
</feature>
<feature type="peptide" id="PRO_0000284135" description="RLRF peptide 1">
    <location>
        <begin position="67"/>
        <end position="77"/>
    </location>
</feature>
<feature type="peptide" id="PRO_0000022380" description="sNPF-associated peptide">
    <location>
        <begin position="80"/>
        <end position="90"/>
    </location>
</feature>
<feature type="peptide" id="PRO_0000022381" description="sNPF peptide 2" evidence="5">
    <location>
        <begin position="93"/>
        <end position="102"/>
    </location>
</feature>
<feature type="peptide" id="PRO_0000284136" description="RLRF peptide 2" evidence="5">
    <location>
        <begin position="104"/>
        <end position="111"/>
    </location>
</feature>
<feature type="propeptide" id="PRO_0000435014" evidence="7">
    <location>
        <begin position="115"/>
        <end position="165"/>
    </location>
</feature>
<feature type="peptide" id="PRO_0000435015" description="sNPF peptide 3" evidence="5">
    <location>
        <begin position="167"/>
        <end position="173"/>
    </location>
</feature>
<feature type="propeptide" id="PRO_0000435016" evidence="7">
    <location>
        <begin position="176"/>
        <end position="246"/>
    </location>
</feature>
<feature type="peptide" id="PRO_0000435017" description="sNPF peptide 4" evidence="5">
    <location>
        <begin position="248"/>
        <end position="254"/>
    </location>
</feature>
<feature type="propeptide" id="PRO_0000022382" evidence="7">
    <location>
        <begin position="257"/>
        <end position="281"/>
    </location>
</feature>
<feature type="region of interest" description="Disordered" evidence="3">
    <location>
        <begin position="137"/>
        <end position="156"/>
    </location>
</feature>
<feature type="region of interest" description="Disordered" evidence="3">
    <location>
        <begin position="226"/>
        <end position="281"/>
    </location>
</feature>
<feature type="compositionally biased region" description="Polar residues" evidence="3">
    <location>
        <begin position="271"/>
        <end position="281"/>
    </location>
</feature>
<feature type="modified residue" description="Phenylalanine amide" evidence="1">
    <location>
        <position position="77"/>
    </location>
</feature>
<feature type="modified residue" description="Phenylalanine amide" evidence="5">
    <location>
        <position position="111"/>
    </location>
</feature>
<feature type="modified residue" description="Tryptophan amide" evidence="5">
    <location>
        <position position="173"/>
    </location>
</feature>
<feature type="modified residue" description="Tryptophan amide" evidence="5">
    <location>
        <position position="254"/>
    </location>
</feature>
<feature type="sequence conflict" description="In Ref. 4; AAN71535." evidence="7" ref="4">
    <original>L</original>
    <variation>Q</variation>
    <location>
        <position position="8"/>
    </location>
</feature>
<feature type="sequence conflict" description="In Ref. 4; AAN71535." evidence="7" ref="4">
    <original>K</original>
    <variation>R</variation>
    <location>
        <position position="100"/>
    </location>
</feature>
<feature type="sequence conflict" description="In Ref. 1; AAU87571." evidence="7" ref="1">
    <original>L</original>
    <variation>P</variation>
    <location>
        <position position="130"/>
    </location>
</feature>
<feature type="sequence conflict" description="In Ref. 1; AAU87571." evidence="7" ref="1">
    <location>
        <position position="144"/>
    </location>
</feature>
<feature type="sequence conflict" description="In Ref. 1; AAU87571." evidence="7" ref="1">
    <original>T</original>
    <variation>S</variation>
    <location>
        <position position="147"/>
    </location>
</feature>
<feature type="sequence conflict" description="In Ref. 1; AAU87571." evidence="7" ref="1">
    <original>DS</original>
    <variation>NF</variation>
    <location>
        <begin position="150"/>
        <end position="151"/>
    </location>
</feature>
<feature type="sequence conflict" description="In Ref. 1; AAU87571." evidence="7" ref="1">
    <original>A</original>
    <variation>S</variation>
    <location>
        <position position="182"/>
    </location>
</feature>
<feature type="sequence conflict" description="In Ref. 1; AAU87571." evidence="7" ref="1">
    <original>T</original>
    <variation>A</variation>
    <location>
        <position position="233"/>
    </location>
</feature>
<feature type="sequence conflict" description="In Ref. 4; AAN71535." evidence="7" ref="4">
    <original>R</original>
    <variation>G</variation>
    <location>
        <position position="247"/>
    </location>
</feature>
<accession>Q9VIQ0</accession>
<accession>Q5Y9D1</accession>
<accession>Q6YLS6</accession>
<gene>
    <name type="primary">sNPF</name>
    <name type="ORF">CG13968</name>
</gene>
<name>SNPF_DROME</name>
<sequence length="281" mass="32545">MFHLKRELSQGCALALICLVSLQMQQPAQAEVSSAQGTPLSNLYDNLLQREYAGPVVFPNHQVERKAQRSPSLRLRFGRSDPDMLNSIVEKRWFGDVNQKPIRSPSLRLRFGRRDPSLPQMRRTAYDDLLERELTLNSQQQQQQLGTEPDSDLGADYDGLYERVVRKPQRLRWGRSVPQFEANNADNEQIERSQWYNSLLNSDKMRRMLVALQQQYEIPENVASYANDEDTDTDLNNDTSEFQREVRKPMRLRWGRSTGKAPSEQKHTPEETSSIPPKTQN</sequence>
<protein>
    <recommendedName>
        <fullName>Short neuropeptide F</fullName>
    </recommendedName>
    <component>
        <recommendedName>
            <fullName>sNPF-associated peptide</fullName>
            <shortName>sNPF-AP</shortName>
        </recommendedName>
    </component>
    <component>
        <recommendedName>
            <fullName>sNPF peptide 2</fullName>
            <shortName>sNPF-2</shortName>
        </recommendedName>
    </component>
    <component>
        <recommendedName>
            <fullName evidence="6">sNPF peptide 3</fullName>
            <shortName evidence="6">sNPF-3</shortName>
        </recommendedName>
    </component>
    <component>
        <recommendedName>
            <fullName evidence="6">sNPF peptide 4</fullName>
            <shortName evidence="6">sNPF-4</shortName>
        </recommendedName>
    </component>
    <component>
        <recommendedName>
            <fullName>RLRF peptide 1</fullName>
        </recommendedName>
    </component>
    <component>
        <recommendedName>
            <fullName>RLRF peptide 2</fullName>
        </recommendedName>
    </component>
</protein>
<comment type="function">
    <text evidence="4">Plays a role in controlling food intake and regulating body size.</text>
</comment>
<comment type="subcellular location">
    <subcellularLocation>
        <location>Secreted</location>
    </subcellularLocation>
</comment>
<comment type="tissue specificity">
    <text evidence="4">Stage 17 embryos show expression in the two brain hemispheres (neural cells located in the dorsal posterior region), the connected ventral ganglion (pairs of neural cells along the ventral midline) and the peripheral nervous system (expressed in the antennal-maxillary sensory cells). In the brain hemispheres of the feeding third instar larva, expression in neural cells is located in the dorsal-anterior region of the protocerebrum. In the larval ventral ganglion, expression is seen in the neural cells located in the subesophagial region, along the ventral midline and in thoracic and abdominal segments. In the adult brain, expression is seen in the medulla and the mushroom body calyx (at protein level).</text>
</comment>
<comment type="developmental stage">
    <text evidence="4">Expressed throughout development from embryo to adult.</text>
</comment>
<comment type="mass spectrometry" mass="1203.62" method="MALDI" evidence="5">
    <molecule>sNPF peptide 2</molecule>
</comment>
<comment type="mass spectrometry" mass="974.59" method="MALDI" evidence="5">
    <molecule>RLRF peptide 2</molecule>
</comment>
<comment type="mass spectrometry" mass="982.61" method="MALDI" evidence="5">
    <molecule>sNPF peptide 3</molecule>
</comment>
<comment type="mass spectrometry" mass="985.59" method="MALDI" evidence="5">
    <molecule>sNPF peptide 4</molecule>
</comment>
<comment type="miscellaneous">
    <text>Flies overexpressing sNPF are heavier and bigger than wild-type. But loss-of-function flies are not smaller than wild-type.</text>
</comment>
<comment type="similarity">
    <text evidence="7">Belongs to the NPY family.</text>
</comment>
<comment type="sequence caution" evidence="7">
    <conflict type="miscellaneous discrepancy">
        <sequence resource="EMBL-CDS" id="AAR12637"/>
    </conflict>
    <text>Probable cloning artifact.</text>
</comment>
<reference key="1">
    <citation type="journal article" date="2004" name="J. Biol. Chem.">
        <title>Drosophila short neuropeptide F regulates food intake and body size.</title>
        <authorList>
            <person name="Lee K.-S."/>
            <person name="You K.-H."/>
            <person name="Choo J.-K."/>
            <person name="Han Y.-M."/>
            <person name="Yu K."/>
        </authorList>
    </citation>
    <scope>NUCLEOTIDE SEQUENCE [MRNA]</scope>
    <scope>FUNCTION</scope>
    <scope>TISSUE SPECIFICITY</scope>
    <scope>DEVELOPMENTAL STAGE</scope>
    <source>
        <strain>Oregon-R</strain>
        <tissue>Head</tissue>
    </source>
</reference>
<reference key="2">
    <citation type="journal article" date="2000" name="Science">
        <title>The genome sequence of Drosophila melanogaster.</title>
        <authorList>
            <person name="Adams M.D."/>
            <person name="Celniker S.E."/>
            <person name="Holt R.A."/>
            <person name="Evans C.A."/>
            <person name="Gocayne J.D."/>
            <person name="Amanatides P.G."/>
            <person name="Scherer S.E."/>
            <person name="Li P.W."/>
            <person name="Hoskins R.A."/>
            <person name="Galle R.F."/>
            <person name="George R.A."/>
            <person name="Lewis S.E."/>
            <person name="Richards S."/>
            <person name="Ashburner M."/>
            <person name="Henderson S.N."/>
            <person name="Sutton G.G."/>
            <person name="Wortman J.R."/>
            <person name="Yandell M.D."/>
            <person name="Zhang Q."/>
            <person name="Chen L.X."/>
            <person name="Brandon R.C."/>
            <person name="Rogers Y.-H.C."/>
            <person name="Blazej R.G."/>
            <person name="Champe M."/>
            <person name="Pfeiffer B.D."/>
            <person name="Wan K.H."/>
            <person name="Doyle C."/>
            <person name="Baxter E.G."/>
            <person name="Helt G."/>
            <person name="Nelson C.R."/>
            <person name="Miklos G.L.G."/>
            <person name="Abril J.F."/>
            <person name="Agbayani A."/>
            <person name="An H.-J."/>
            <person name="Andrews-Pfannkoch C."/>
            <person name="Baldwin D."/>
            <person name="Ballew R.M."/>
            <person name="Basu A."/>
            <person name="Baxendale J."/>
            <person name="Bayraktaroglu L."/>
            <person name="Beasley E.M."/>
            <person name="Beeson K.Y."/>
            <person name="Benos P.V."/>
            <person name="Berman B.P."/>
            <person name="Bhandari D."/>
            <person name="Bolshakov S."/>
            <person name="Borkova D."/>
            <person name="Botchan M.R."/>
            <person name="Bouck J."/>
            <person name="Brokstein P."/>
            <person name="Brottier P."/>
            <person name="Burtis K.C."/>
            <person name="Busam D.A."/>
            <person name="Butler H."/>
            <person name="Cadieu E."/>
            <person name="Center A."/>
            <person name="Chandra I."/>
            <person name="Cherry J.M."/>
            <person name="Cawley S."/>
            <person name="Dahlke C."/>
            <person name="Davenport L.B."/>
            <person name="Davies P."/>
            <person name="de Pablos B."/>
            <person name="Delcher A."/>
            <person name="Deng Z."/>
            <person name="Mays A.D."/>
            <person name="Dew I."/>
            <person name="Dietz S.M."/>
            <person name="Dodson K."/>
            <person name="Doup L.E."/>
            <person name="Downes M."/>
            <person name="Dugan-Rocha S."/>
            <person name="Dunkov B.C."/>
            <person name="Dunn P."/>
            <person name="Durbin K.J."/>
            <person name="Evangelista C.C."/>
            <person name="Ferraz C."/>
            <person name="Ferriera S."/>
            <person name="Fleischmann W."/>
            <person name="Fosler C."/>
            <person name="Gabrielian A.E."/>
            <person name="Garg N.S."/>
            <person name="Gelbart W.M."/>
            <person name="Glasser K."/>
            <person name="Glodek A."/>
            <person name="Gong F."/>
            <person name="Gorrell J.H."/>
            <person name="Gu Z."/>
            <person name="Guan P."/>
            <person name="Harris M."/>
            <person name="Harris N.L."/>
            <person name="Harvey D.A."/>
            <person name="Heiman T.J."/>
            <person name="Hernandez J.R."/>
            <person name="Houck J."/>
            <person name="Hostin D."/>
            <person name="Houston K.A."/>
            <person name="Howland T.J."/>
            <person name="Wei M.-H."/>
            <person name="Ibegwam C."/>
            <person name="Jalali M."/>
            <person name="Kalush F."/>
            <person name="Karpen G.H."/>
            <person name="Ke Z."/>
            <person name="Kennison J.A."/>
            <person name="Ketchum K.A."/>
            <person name="Kimmel B.E."/>
            <person name="Kodira C.D."/>
            <person name="Kraft C.L."/>
            <person name="Kravitz S."/>
            <person name="Kulp D."/>
            <person name="Lai Z."/>
            <person name="Lasko P."/>
            <person name="Lei Y."/>
            <person name="Levitsky A.A."/>
            <person name="Li J.H."/>
            <person name="Li Z."/>
            <person name="Liang Y."/>
            <person name="Lin X."/>
            <person name="Liu X."/>
            <person name="Mattei B."/>
            <person name="McIntosh T.C."/>
            <person name="McLeod M.P."/>
            <person name="McPherson D."/>
            <person name="Merkulov G."/>
            <person name="Milshina N.V."/>
            <person name="Mobarry C."/>
            <person name="Morris J."/>
            <person name="Moshrefi A."/>
            <person name="Mount S.M."/>
            <person name="Moy M."/>
            <person name="Murphy B."/>
            <person name="Murphy L."/>
            <person name="Muzny D.M."/>
            <person name="Nelson D.L."/>
            <person name="Nelson D.R."/>
            <person name="Nelson K.A."/>
            <person name="Nixon K."/>
            <person name="Nusskern D.R."/>
            <person name="Pacleb J.M."/>
            <person name="Palazzolo M."/>
            <person name="Pittman G.S."/>
            <person name="Pan S."/>
            <person name="Pollard J."/>
            <person name="Puri V."/>
            <person name="Reese M.G."/>
            <person name="Reinert K."/>
            <person name="Remington K."/>
            <person name="Saunders R.D.C."/>
            <person name="Scheeler F."/>
            <person name="Shen H."/>
            <person name="Shue B.C."/>
            <person name="Siden-Kiamos I."/>
            <person name="Simpson M."/>
            <person name="Skupski M.P."/>
            <person name="Smith T.J."/>
            <person name="Spier E."/>
            <person name="Spradling A.C."/>
            <person name="Stapleton M."/>
            <person name="Strong R."/>
            <person name="Sun E."/>
            <person name="Svirskas R."/>
            <person name="Tector C."/>
            <person name="Turner R."/>
            <person name="Venter E."/>
            <person name="Wang A.H."/>
            <person name="Wang X."/>
            <person name="Wang Z.-Y."/>
            <person name="Wassarman D.A."/>
            <person name="Weinstock G.M."/>
            <person name="Weissenbach J."/>
            <person name="Williams S.M."/>
            <person name="Woodage T."/>
            <person name="Worley K.C."/>
            <person name="Wu D."/>
            <person name="Yang S."/>
            <person name="Yao Q.A."/>
            <person name="Ye J."/>
            <person name="Yeh R.-F."/>
            <person name="Zaveri J.S."/>
            <person name="Zhan M."/>
            <person name="Zhang G."/>
            <person name="Zhao Q."/>
            <person name="Zheng L."/>
            <person name="Zheng X.H."/>
            <person name="Zhong F.N."/>
            <person name="Zhong W."/>
            <person name="Zhou X."/>
            <person name="Zhu S.C."/>
            <person name="Zhu X."/>
            <person name="Smith H.O."/>
            <person name="Gibbs R.A."/>
            <person name="Myers E.W."/>
            <person name="Rubin G.M."/>
            <person name="Venter J.C."/>
        </authorList>
    </citation>
    <scope>NUCLEOTIDE SEQUENCE [LARGE SCALE GENOMIC DNA]</scope>
    <source>
        <strain>Berkeley</strain>
    </source>
</reference>
<reference key="3">
    <citation type="journal article" date="2002" name="Genome Biol.">
        <title>Annotation of the Drosophila melanogaster euchromatic genome: a systematic review.</title>
        <authorList>
            <person name="Misra S."/>
            <person name="Crosby M.A."/>
            <person name="Mungall C.J."/>
            <person name="Matthews B.B."/>
            <person name="Campbell K.S."/>
            <person name="Hradecky P."/>
            <person name="Huang Y."/>
            <person name="Kaminker J.S."/>
            <person name="Millburn G.H."/>
            <person name="Prochnik S.E."/>
            <person name="Smith C.D."/>
            <person name="Tupy J.L."/>
            <person name="Whitfield E.J."/>
            <person name="Bayraktaroglu L."/>
            <person name="Berman B.P."/>
            <person name="Bettencourt B.R."/>
            <person name="Celniker S.E."/>
            <person name="de Grey A.D.N.J."/>
            <person name="Drysdale R.A."/>
            <person name="Harris N.L."/>
            <person name="Richter J."/>
            <person name="Russo S."/>
            <person name="Schroeder A.J."/>
            <person name="Shu S.Q."/>
            <person name="Stapleton M."/>
            <person name="Yamada C."/>
            <person name="Ashburner M."/>
            <person name="Gelbart W.M."/>
            <person name="Rubin G.M."/>
            <person name="Lewis S.E."/>
        </authorList>
    </citation>
    <scope>GENOME REANNOTATION</scope>
    <source>
        <strain>Berkeley</strain>
    </source>
</reference>
<reference key="4">
    <citation type="journal article" date="2002" name="Genome Biol.">
        <title>A Drosophila full-length cDNA resource.</title>
        <authorList>
            <person name="Stapleton M."/>
            <person name="Carlson J.W."/>
            <person name="Brokstein P."/>
            <person name="Yu C."/>
            <person name="Champe M."/>
            <person name="George R.A."/>
            <person name="Guarin H."/>
            <person name="Kronmiller B."/>
            <person name="Pacleb J.M."/>
            <person name="Park S."/>
            <person name="Wan K.H."/>
            <person name="Rubin G.M."/>
            <person name="Celniker S.E."/>
        </authorList>
    </citation>
    <scope>NUCLEOTIDE SEQUENCE [LARGE SCALE MRNA]</scope>
    <source>
        <strain>Berkeley</strain>
        <tissue>Head</tissue>
    </source>
</reference>
<reference key="5">
    <citation type="submission" date="2002-06" db="EMBL/GenBank/DDBJ databases">
        <title>Identification of two LRLRFa peptides and their receptor from Drosophila melanogaster.</title>
        <authorList>
            <person name="Garczynski S.F."/>
            <person name="Brown M.R."/>
            <person name="Crim J.W."/>
        </authorList>
    </citation>
    <scope>NUCLEOTIDE SEQUENCE [MRNA] OF 1-189</scope>
</reference>
<reference key="6">
    <citation type="journal article" date="2002" name="J. Biol. Chem.">
        <title>Peptidomics of the larval Drosophila melanogaster central nervous system.</title>
        <authorList>
            <person name="Baggerman G."/>
            <person name="Cerstiaens A."/>
            <person name="De Loof A."/>
            <person name="Schoofs L."/>
        </authorList>
    </citation>
    <scope>PROTEIN SEQUENCE OF 80-90 AND 93-102</scope>
    <source>
        <tissue>Larva</tissue>
    </source>
</reference>
<reference key="7">
    <citation type="journal article" date="2011" name="J. Proteome Res.">
        <title>Peptidomics and peptide hormone processing in the Drosophila midgut.</title>
        <authorList>
            <person name="Reiher W."/>
            <person name="Shirras C."/>
            <person name="Kahnt J."/>
            <person name="Baumeister S."/>
            <person name="Isaac R.E."/>
            <person name="Wegener C."/>
        </authorList>
    </citation>
    <scope>PROTEIN SEQUENCE OF 93-102; 104-111; 167-173 AND 248-254</scope>
    <scope>IDENTIFICATION BY MASS SPECTROMETRY</scope>
    <scope>MASS SPECTROMETRY</scope>
    <scope>AMIDATION AT PHE-111; TRP-173 AND TRP-254</scope>
    <source>
        <tissue evidence="6">Midgut</tissue>
    </source>
</reference>